<gene>
    <name evidence="1" type="primary">frr</name>
    <name type="ordered locus">M28_Spy0366</name>
</gene>
<organism>
    <name type="scientific">Streptococcus pyogenes serotype M28 (strain MGAS6180)</name>
    <dbReference type="NCBI Taxonomy" id="319701"/>
    <lineage>
        <taxon>Bacteria</taxon>
        <taxon>Bacillati</taxon>
        <taxon>Bacillota</taxon>
        <taxon>Bacilli</taxon>
        <taxon>Lactobacillales</taxon>
        <taxon>Streptococcaceae</taxon>
        <taxon>Streptococcus</taxon>
    </lineage>
</organism>
<proteinExistence type="inferred from homology"/>
<sequence>MANAIIETAKERFAQSHQSLSREYASIRAGRANASLLDRIQVDYYGAPTPLNQLASITVPEARVLLISPFDKSSIKDIERALNASDLGITPANDGSVIRLVIPALTEETRKELAKEVKKVGENAKIAIRNIRRDAMDDAKKQEKAKEITEDELKTLEKDIQKVTDDAIKEIDRMTAEKEKELLSV</sequence>
<dbReference type="EMBL" id="CP000056">
    <property type="protein sequence ID" value="AAX71480.1"/>
    <property type="molecule type" value="Genomic_DNA"/>
</dbReference>
<dbReference type="RefSeq" id="WP_011284568.1">
    <property type="nucleotide sequence ID" value="NC_007296.2"/>
</dbReference>
<dbReference type="SMR" id="Q48UX6"/>
<dbReference type="KEGG" id="spb:M28_Spy0366"/>
<dbReference type="HOGENOM" id="CLU_073981_2_0_9"/>
<dbReference type="GO" id="GO:0005737">
    <property type="term" value="C:cytoplasm"/>
    <property type="evidence" value="ECO:0007669"/>
    <property type="project" value="UniProtKB-SubCell"/>
</dbReference>
<dbReference type="GO" id="GO:0043023">
    <property type="term" value="F:ribosomal large subunit binding"/>
    <property type="evidence" value="ECO:0007669"/>
    <property type="project" value="TreeGrafter"/>
</dbReference>
<dbReference type="GO" id="GO:0006415">
    <property type="term" value="P:translational termination"/>
    <property type="evidence" value="ECO:0007669"/>
    <property type="project" value="UniProtKB-UniRule"/>
</dbReference>
<dbReference type="CDD" id="cd00520">
    <property type="entry name" value="RRF"/>
    <property type="match status" value="1"/>
</dbReference>
<dbReference type="FunFam" id="1.10.132.20:FF:000001">
    <property type="entry name" value="Ribosome-recycling factor"/>
    <property type="match status" value="1"/>
</dbReference>
<dbReference type="FunFam" id="3.30.1360.40:FF:000001">
    <property type="entry name" value="Ribosome-recycling factor"/>
    <property type="match status" value="1"/>
</dbReference>
<dbReference type="Gene3D" id="3.30.1360.40">
    <property type="match status" value="1"/>
</dbReference>
<dbReference type="Gene3D" id="1.10.132.20">
    <property type="entry name" value="Ribosome-recycling factor"/>
    <property type="match status" value="1"/>
</dbReference>
<dbReference type="HAMAP" id="MF_00040">
    <property type="entry name" value="RRF"/>
    <property type="match status" value="1"/>
</dbReference>
<dbReference type="InterPro" id="IPR002661">
    <property type="entry name" value="Ribosome_recyc_fac"/>
</dbReference>
<dbReference type="InterPro" id="IPR023584">
    <property type="entry name" value="Ribosome_recyc_fac_dom"/>
</dbReference>
<dbReference type="InterPro" id="IPR036191">
    <property type="entry name" value="RRF_sf"/>
</dbReference>
<dbReference type="NCBIfam" id="TIGR00496">
    <property type="entry name" value="frr"/>
    <property type="match status" value="1"/>
</dbReference>
<dbReference type="PANTHER" id="PTHR20982:SF3">
    <property type="entry name" value="MITOCHONDRIAL RIBOSOME RECYCLING FACTOR PSEUDO 1"/>
    <property type="match status" value="1"/>
</dbReference>
<dbReference type="PANTHER" id="PTHR20982">
    <property type="entry name" value="RIBOSOME RECYCLING FACTOR"/>
    <property type="match status" value="1"/>
</dbReference>
<dbReference type="Pfam" id="PF01765">
    <property type="entry name" value="RRF"/>
    <property type="match status" value="1"/>
</dbReference>
<dbReference type="SUPFAM" id="SSF55194">
    <property type="entry name" value="Ribosome recycling factor, RRF"/>
    <property type="match status" value="1"/>
</dbReference>
<reference key="1">
    <citation type="journal article" date="2005" name="J. Infect. Dis.">
        <title>Genome sequence of a serotype M28 strain of group A Streptococcus: potential new insights into puerperal sepsis and bacterial disease specificity.</title>
        <authorList>
            <person name="Green N.M."/>
            <person name="Zhang S."/>
            <person name="Porcella S.F."/>
            <person name="Nagiec M.J."/>
            <person name="Barbian K.D."/>
            <person name="Beres S.B."/>
            <person name="Lefebvre R.B."/>
            <person name="Musser J.M."/>
        </authorList>
    </citation>
    <scope>NUCLEOTIDE SEQUENCE [LARGE SCALE GENOMIC DNA]</scope>
    <source>
        <strain>MGAS6180</strain>
    </source>
</reference>
<keyword id="KW-0963">Cytoplasm</keyword>
<keyword id="KW-0648">Protein biosynthesis</keyword>
<name>RRF_STRPM</name>
<evidence type="ECO:0000255" key="1">
    <source>
        <dbReference type="HAMAP-Rule" id="MF_00040"/>
    </source>
</evidence>
<feature type="chain" id="PRO_1000003288" description="Ribosome-recycling factor">
    <location>
        <begin position="1"/>
        <end position="185"/>
    </location>
</feature>
<protein>
    <recommendedName>
        <fullName evidence="1">Ribosome-recycling factor</fullName>
        <shortName evidence="1">RRF</shortName>
    </recommendedName>
    <alternativeName>
        <fullName evidence="1">Ribosome-releasing factor</fullName>
    </alternativeName>
</protein>
<accession>Q48UX6</accession>
<comment type="function">
    <text evidence="1">Responsible for the release of ribosomes from messenger RNA at the termination of protein biosynthesis. May increase the efficiency of translation by recycling ribosomes from one round of translation to another.</text>
</comment>
<comment type="subcellular location">
    <subcellularLocation>
        <location evidence="1">Cytoplasm</location>
    </subcellularLocation>
</comment>
<comment type="similarity">
    <text evidence="1">Belongs to the RRF family.</text>
</comment>